<name>RSMF_VIBCM</name>
<comment type="function">
    <text evidence="1">Specifically methylates the cytosine at position 1407 (m5C1407) of 16S rRNA.</text>
</comment>
<comment type="catalytic activity">
    <reaction evidence="1">
        <text>cytidine(1407) in 16S rRNA + S-adenosyl-L-methionine = 5-methylcytidine(1407) in 16S rRNA + S-adenosyl-L-homocysteine + H(+)</text>
        <dbReference type="Rhea" id="RHEA:42756"/>
        <dbReference type="Rhea" id="RHEA-COMP:10223"/>
        <dbReference type="Rhea" id="RHEA-COMP:10224"/>
        <dbReference type="ChEBI" id="CHEBI:15378"/>
        <dbReference type="ChEBI" id="CHEBI:57856"/>
        <dbReference type="ChEBI" id="CHEBI:59789"/>
        <dbReference type="ChEBI" id="CHEBI:74483"/>
        <dbReference type="ChEBI" id="CHEBI:82748"/>
        <dbReference type="EC" id="2.1.1.178"/>
    </reaction>
</comment>
<comment type="subcellular location">
    <subcellularLocation>
        <location evidence="1">Cytoplasm</location>
    </subcellularLocation>
</comment>
<comment type="similarity">
    <text evidence="1">Belongs to the class I-like SAM-binding methyltransferase superfamily. RsmB/NOP family.</text>
</comment>
<comment type="sequence caution" evidence="2">
    <conflict type="erroneous initiation">
        <sequence resource="EMBL-CDS" id="ACP05761"/>
    </conflict>
</comment>
<gene>
    <name evidence="1" type="primary">rsmF</name>
    <name type="ordered locus">VCM66_1445</name>
</gene>
<evidence type="ECO:0000255" key="1">
    <source>
        <dbReference type="HAMAP-Rule" id="MF_01579"/>
    </source>
</evidence>
<evidence type="ECO:0000305" key="2"/>
<accession>C3LMI5</accession>
<protein>
    <recommendedName>
        <fullName evidence="1">Ribosomal RNA small subunit methyltransferase F</fullName>
        <ecNumber evidence="1">2.1.1.178</ecNumber>
    </recommendedName>
    <alternativeName>
        <fullName evidence="1">16S rRNA m5C1407 methyltransferase</fullName>
    </alternativeName>
    <alternativeName>
        <fullName evidence="1">rRNA (cytosine-C(5)-)-methyltransferase RsmF</fullName>
    </alternativeName>
</protein>
<proteinExistence type="inferred from homology"/>
<reference key="1">
    <citation type="journal article" date="2008" name="PLoS ONE">
        <title>A recalibrated molecular clock and independent origins for the cholera pandemic clones.</title>
        <authorList>
            <person name="Feng L."/>
            <person name="Reeves P.R."/>
            <person name="Lan R."/>
            <person name="Ren Y."/>
            <person name="Gao C."/>
            <person name="Zhou Z."/>
            <person name="Ren Y."/>
            <person name="Cheng J."/>
            <person name="Wang W."/>
            <person name="Wang J."/>
            <person name="Qian W."/>
            <person name="Li D."/>
            <person name="Wang L."/>
        </authorList>
    </citation>
    <scope>NUCLEOTIDE SEQUENCE [LARGE SCALE GENOMIC DNA]</scope>
    <source>
        <strain>M66-2</strain>
    </source>
</reference>
<sequence>MHPNISLPEPFIASMAKILPDPTQLADFIAACQRPLRKSIRVNTLKISVAEFCQRAAEKEWQLTPVPWCENGFWIDADESLVPLGNTAEHMAGLFYIQEASSMMPVSALFMGNAHYDSVLDMAAAPGSKTTQMAALMDNQGVLVANEFSASRVKVLHANIERCGIRNTALSNFDGCVFGGWLPERFDAVLIDAPCSGEGTIRKDPDAMKNWSLESIQSIANTQKALIESAFQALKVGGTLVYSTCTLSREENQQVCWHLKQTYGDAVSFESLGNLFEHASLALTEEGFLHIFPQMYDCEGFFVAKIRKLASVPTPEVNKRLGKFPFNKASHKQQAEIAQQLHKSLGIELPSDAQVWLRDNDVWLFPEALEPLLGELRFSRMGIKIAEAHKSGYRWQHQVATCLASSSASHSVELDTTQAREWFMGRDVRPEGQSGQGEVIIRYANDVIGLGKWVGNRVKNGLPRELVRDKNLF</sequence>
<dbReference type="EC" id="2.1.1.178" evidence="1"/>
<dbReference type="EMBL" id="CP001233">
    <property type="protein sequence ID" value="ACP05761.1"/>
    <property type="status" value="ALT_INIT"/>
    <property type="molecule type" value="Genomic_DNA"/>
</dbReference>
<dbReference type="RefSeq" id="WP_000553486.1">
    <property type="nucleotide sequence ID" value="NC_012578.1"/>
</dbReference>
<dbReference type="SMR" id="C3LMI5"/>
<dbReference type="KEGG" id="vcm:VCM66_1445"/>
<dbReference type="HOGENOM" id="CLU_005316_6_2_6"/>
<dbReference type="Proteomes" id="UP000001217">
    <property type="component" value="Chromosome I"/>
</dbReference>
<dbReference type="GO" id="GO:0005737">
    <property type="term" value="C:cytoplasm"/>
    <property type="evidence" value="ECO:0007669"/>
    <property type="project" value="UniProtKB-SubCell"/>
</dbReference>
<dbReference type="GO" id="GO:0003723">
    <property type="term" value="F:RNA binding"/>
    <property type="evidence" value="ECO:0007669"/>
    <property type="project" value="UniProtKB-KW"/>
</dbReference>
<dbReference type="GO" id="GO:0009383">
    <property type="term" value="F:rRNA (cytosine-C5-)-methyltransferase activity"/>
    <property type="evidence" value="ECO:0007669"/>
    <property type="project" value="TreeGrafter"/>
</dbReference>
<dbReference type="GO" id="GO:0070475">
    <property type="term" value="P:rRNA base methylation"/>
    <property type="evidence" value="ECO:0007669"/>
    <property type="project" value="TreeGrafter"/>
</dbReference>
<dbReference type="FunFam" id="3.40.50.150:FF:000079">
    <property type="entry name" value="Ribosomal RNA small subunit methyltransferase F"/>
    <property type="match status" value="1"/>
</dbReference>
<dbReference type="Gene3D" id="3.10.450.720">
    <property type="match status" value="1"/>
</dbReference>
<dbReference type="Gene3D" id="3.40.50.150">
    <property type="entry name" value="Vaccinia Virus protein VP39"/>
    <property type="match status" value="1"/>
</dbReference>
<dbReference type="HAMAP" id="MF_01579">
    <property type="entry name" value="16SrRNA_methyltr_F"/>
    <property type="match status" value="1"/>
</dbReference>
<dbReference type="InterPro" id="IPR031341">
    <property type="entry name" value="Methyltr_RsmF_N"/>
</dbReference>
<dbReference type="InterPro" id="IPR049560">
    <property type="entry name" value="MeTrfase_RsmB-F_NOP2_cat"/>
</dbReference>
<dbReference type="InterPro" id="IPR001678">
    <property type="entry name" value="MeTrfase_RsmB-F_NOP2_dom"/>
</dbReference>
<dbReference type="InterPro" id="IPR027391">
    <property type="entry name" value="Nol1_Nop2_Fmu_2"/>
</dbReference>
<dbReference type="InterPro" id="IPR011023">
    <property type="entry name" value="Nop2p"/>
</dbReference>
<dbReference type="InterPro" id="IPR023267">
    <property type="entry name" value="RCMT"/>
</dbReference>
<dbReference type="InterPro" id="IPR023545">
    <property type="entry name" value="rRNA_ssu_MeTfrase_F"/>
</dbReference>
<dbReference type="InterPro" id="IPR018314">
    <property type="entry name" value="RsmB/NOL1/NOP2-like_CS"/>
</dbReference>
<dbReference type="InterPro" id="IPR029063">
    <property type="entry name" value="SAM-dependent_MTases_sf"/>
</dbReference>
<dbReference type="InterPro" id="IPR048457">
    <property type="entry name" value="YebU_pre-PUA_dom"/>
</dbReference>
<dbReference type="NCBIfam" id="TIGR00446">
    <property type="entry name" value="nop2p"/>
    <property type="match status" value="1"/>
</dbReference>
<dbReference type="NCBIfam" id="NF008898">
    <property type="entry name" value="PRK11933.1"/>
    <property type="match status" value="1"/>
</dbReference>
<dbReference type="PANTHER" id="PTHR22807:SF30">
    <property type="entry name" value="28S RRNA (CYTOSINE(4447)-C(5))-METHYLTRANSFERASE-RELATED"/>
    <property type="match status" value="1"/>
</dbReference>
<dbReference type="PANTHER" id="PTHR22807">
    <property type="entry name" value="NOP2 YEAST -RELATED NOL1/NOP2/FMU SUN DOMAIN-CONTAINING"/>
    <property type="match status" value="1"/>
</dbReference>
<dbReference type="Pfam" id="PF01189">
    <property type="entry name" value="Methyltr_RsmB-F"/>
    <property type="match status" value="1"/>
</dbReference>
<dbReference type="Pfam" id="PF17125">
    <property type="entry name" value="Methyltr_RsmF_N"/>
    <property type="match status" value="1"/>
</dbReference>
<dbReference type="Pfam" id="PF13636">
    <property type="entry name" value="Methyltranf_PUA"/>
    <property type="match status" value="1"/>
</dbReference>
<dbReference type="Pfam" id="PF21150">
    <property type="entry name" value="YebU_pre-PUA_dom"/>
    <property type="match status" value="1"/>
</dbReference>
<dbReference type="PRINTS" id="PR02008">
    <property type="entry name" value="RCMTFAMILY"/>
</dbReference>
<dbReference type="SUPFAM" id="SSF53335">
    <property type="entry name" value="S-adenosyl-L-methionine-dependent methyltransferases"/>
    <property type="match status" value="1"/>
</dbReference>
<dbReference type="PROSITE" id="PS01153">
    <property type="entry name" value="NOL1_NOP2_SUN"/>
    <property type="match status" value="1"/>
</dbReference>
<dbReference type="PROSITE" id="PS51686">
    <property type="entry name" value="SAM_MT_RSMB_NOP"/>
    <property type="match status" value="1"/>
</dbReference>
<organism>
    <name type="scientific">Vibrio cholerae serotype O1 (strain M66-2)</name>
    <dbReference type="NCBI Taxonomy" id="579112"/>
    <lineage>
        <taxon>Bacteria</taxon>
        <taxon>Pseudomonadati</taxon>
        <taxon>Pseudomonadota</taxon>
        <taxon>Gammaproteobacteria</taxon>
        <taxon>Vibrionales</taxon>
        <taxon>Vibrionaceae</taxon>
        <taxon>Vibrio</taxon>
    </lineage>
</organism>
<feature type="chain" id="PRO_0000382590" description="Ribosomal RNA small subunit methyltransferase F">
    <location>
        <begin position="1"/>
        <end position="473"/>
    </location>
</feature>
<feature type="active site" description="Nucleophile" evidence="1">
    <location>
        <position position="245"/>
    </location>
</feature>
<feature type="binding site" evidence="1">
    <location>
        <begin position="123"/>
        <end position="129"/>
    </location>
    <ligand>
        <name>S-adenosyl-L-methionine</name>
        <dbReference type="ChEBI" id="CHEBI:59789"/>
    </ligand>
</feature>
<feature type="binding site" evidence="1">
    <location>
        <position position="147"/>
    </location>
    <ligand>
        <name>S-adenosyl-L-methionine</name>
        <dbReference type="ChEBI" id="CHEBI:59789"/>
    </ligand>
</feature>
<feature type="binding site" evidence="1">
    <location>
        <position position="174"/>
    </location>
    <ligand>
        <name>S-adenosyl-L-methionine</name>
        <dbReference type="ChEBI" id="CHEBI:59789"/>
    </ligand>
</feature>
<feature type="binding site" evidence="1">
    <location>
        <position position="192"/>
    </location>
    <ligand>
        <name>S-adenosyl-L-methionine</name>
        <dbReference type="ChEBI" id="CHEBI:59789"/>
    </ligand>
</feature>
<keyword id="KW-0963">Cytoplasm</keyword>
<keyword id="KW-0489">Methyltransferase</keyword>
<keyword id="KW-0694">RNA-binding</keyword>
<keyword id="KW-0698">rRNA processing</keyword>
<keyword id="KW-0949">S-adenosyl-L-methionine</keyword>
<keyword id="KW-0808">Transferase</keyword>